<reference key="1">
    <citation type="submission" date="1998-08" db="EMBL/GenBank/DDBJ databases">
        <title>Signal peptide selection derived cDNAs from Arabidopsis thaliana leaves and guard cells.</title>
        <authorList>
            <person name="Stracke R."/>
            <person name="Palme K."/>
        </authorList>
    </citation>
    <scope>NUCLEOTIDE SEQUENCE [LARGE SCALE MRNA] (ISOFORM 2)</scope>
</reference>
<reference key="2">
    <citation type="journal article" date="1999" name="Nature">
        <title>Sequence and analysis of chromosome 4 of the plant Arabidopsis thaliana.</title>
        <authorList>
            <person name="Mayer K.F.X."/>
            <person name="Schueller C."/>
            <person name="Wambutt R."/>
            <person name="Murphy G."/>
            <person name="Volckaert G."/>
            <person name="Pohl T."/>
            <person name="Duesterhoeft A."/>
            <person name="Stiekema W."/>
            <person name="Entian K.-D."/>
            <person name="Terryn N."/>
            <person name="Harris B."/>
            <person name="Ansorge W."/>
            <person name="Brandt P."/>
            <person name="Grivell L.A."/>
            <person name="Rieger M."/>
            <person name="Weichselgartner M."/>
            <person name="de Simone V."/>
            <person name="Obermaier B."/>
            <person name="Mache R."/>
            <person name="Mueller M."/>
            <person name="Kreis M."/>
            <person name="Delseny M."/>
            <person name="Puigdomenech P."/>
            <person name="Watson M."/>
            <person name="Schmidtheini T."/>
            <person name="Reichert B."/>
            <person name="Portetelle D."/>
            <person name="Perez-Alonso M."/>
            <person name="Boutry M."/>
            <person name="Bancroft I."/>
            <person name="Vos P."/>
            <person name="Hoheisel J."/>
            <person name="Zimmermann W."/>
            <person name="Wedler H."/>
            <person name="Ridley P."/>
            <person name="Langham S.-A."/>
            <person name="McCullagh B."/>
            <person name="Bilham L."/>
            <person name="Robben J."/>
            <person name="van der Schueren J."/>
            <person name="Grymonprez B."/>
            <person name="Chuang Y.-J."/>
            <person name="Vandenbussche F."/>
            <person name="Braeken M."/>
            <person name="Weltjens I."/>
            <person name="Voet M."/>
            <person name="Bastiaens I."/>
            <person name="Aert R."/>
            <person name="Defoor E."/>
            <person name="Weitzenegger T."/>
            <person name="Bothe G."/>
            <person name="Ramsperger U."/>
            <person name="Hilbert H."/>
            <person name="Braun M."/>
            <person name="Holzer E."/>
            <person name="Brandt A."/>
            <person name="Peters S."/>
            <person name="van Staveren M."/>
            <person name="Dirkse W."/>
            <person name="Mooijman P."/>
            <person name="Klein Lankhorst R."/>
            <person name="Rose M."/>
            <person name="Hauf J."/>
            <person name="Koetter P."/>
            <person name="Berneiser S."/>
            <person name="Hempel S."/>
            <person name="Feldpausch M."/>
            <person name="Lamberth S."/>
            <person name="Van den Daele H."/>
            <person name="De Keyser A."/>
            <person name="Buysshaert C."/>
            <person name="Gielen J."/>
            <person name="Villarroel R."/>
            <person name="De Clercq R."/>
            <person name="van Montagu M."/>
            <person name="Rogers J."/>
            <person name="Cronin A."/>
            <person name="Quail M.A."/>
            <person name="Bray-Allen S."/>
            <person name="Clark L."/>
            <person name="Doggett J."/>
            <person name="Hall S."/>
            <person name="Kay M."/>
            <person name="Lennard N."/>
            <person name="McLay K."/>
            <person name="Mayes R."/>
            <person name="Pettett A."/>
            <person name="Rajandream M.A."/>
            <person name="Lyne M."/>
            <person name="Benes V."/>
            <person name="Rechmann S."/>
            <person name="Borkova D."/>
            <person name="Bloecker H."/>
            <person name="Scharfe M."/>
            <person name="Grimm M."/>
            <person name="Loehnert T.-H."/>
            <person name="Dose S."/>
            <person name="de Haan M."/>
            <person name="Maarse A.C."/>
            <person name="Schaefer M."/>
            <person name="Mueller-Auer S."/>
            <person name="Gabel C."/>
            <person name="Fuchs M."/>
            <person name="Fartmann B."/>
            <person name="Granderath K."/>
            <person name="Dauner D."/>
            <person name="Herzl A."/>
            <person name="Neumann S."/>
            <person name="Argiriou A."/>
            <person name="Vitale D."/>
            <person name="Liguori R."/>
            <person name="Piravandi E."/>
            <person name="Massenet O."/>
            <person name="Quigley F."/>
            <person name="Clabauld G."/>
            <person name="Muendlein A."/>
            <person name="Felber R."/>
            <person name="Schnabl S."/>
            <person name="Hiller R."/>
            <person name="Schmidt W."/>
            <person name="Lecharny A."/>
            <person name="Aubourg S."/>
            <person name="Chefdor F."/>
            <person name="Cooke R."/>
            <person name="Berger C."/>
            <person name="Monfort A."/>
            <person name="Casacuberta E."/>
            <person name="Gibbons T."/>
            <person name="Weber N."/>
            <person name="Vandenbol M."/>
            <person name="Bargues M."/>
            <person name="Terol J."/>
            <person name="Torres A."/>
            <person name="Perez-Perez A."/>
            <person name="Purnelle B."/>
            <person name="Bent E."/>
            <person name="Johnson S."/>
            <person name="Tacon D."/>
            <person name="Jesse T."/>
            <person name="Heijnen L."/>
            <person name="Schwarz S."/>
            <person name="Scholler P."/>
            <person name="Heber S."/>
            <person name="Francs P."/>
            <person name="Bielke C."/>
            <person name="Frishman D."/>
            <person name="Haase D."/>
            <person name="Lemcke K."/>
            <person name="Mewes H.-W."/>
            <person name="Stocker S."/>
            <person name="Zaccaria P."/>
            <person name="Bevan M."/>
            <person name="Wilson R.K."/>
            <person name="de la Bastide M."/>
            <person name="Habermann K."/>
            <person name="Parnell L."/>
            <person name="Dedhia N."/>
            <person name="Gnoj L."/>
            <person name="Schutz K."/>
            <person name="Huang E."/>
            <person name="Spiegel L."/>
            <person name="Sekhon M."/>
            <person name="Murray J."/>
            <person name="Sheet P."/>
            <person name="Cordes M."/>
            <person name="Abu-Threideh J."/>
            <person name="Stoneking T."/>
            <person name="Kalicki J."/>
            <person name="Graves T."/>
            <person name="Harmon G."/>
            <person name="Edwards J."/>
            <person name="Latreille P."/>
            <person name="Courtney L."/>
            <person name="Cloud J."/>
            <person name="Abbott A."/>
            <person name="Scott K."/>
            <person name="Johnson D."/>
            <person name="Minx P."/>
            <person name="Bentley D."/>
            <person name="Fulton B."/>
            <person name="Miller N."/>
            <person name="Greco T."/>
            <person name="Kemp K."/>
            <person name="Kramer J."/>
            <person name="Fulton L."/>
            <person name="Mardis E."/>
            <person name="Dante M."/>
            <person name="Pepin K."/>
            <person name="Hillier L.W."/>
            <person name="Nelson J."/>
            <person name="Spieth J."/>
            <person name="Ryan E."/>
            <person name="Andrews S."/>
            <person name="Geisel C."/>
            <person name="Layman D."/>
            <person name="Du H."/>
            <person name="Ali J."/>
            <person name="Berghoff A."/>
            <person name="Jones K."/>
            <person name="Drone K."/>
            <person name="Cotton M."/>
            <person name="Joshu C."/>
            <person name="Antonoiu B."/>
            <person name="Zidanic M."/>
            <person name="Strong C."/>
            <person name="Sun H."/>
            <person name="Lamar B."/>
            <person name="Yordan C."/>
            <person name="Ma P."/>
            <person name="Zhong J."/>
            <person name="Preston R."/>
            <person name="Vil D."/>
            <person name="Shekher M."/>
            <person name="Matero A."/>
            <person name="Shah R."/>
            <person name="Swaby I.K."/>
            <person name="O'Shaughnessy A."/>
            <person name="Rodriguez M."/>
            <person name="Hoffman J."/>
            <person name="Till S."/>
            <person name="Granat S."/>
            <person name="Shohdy N."/>
            <person name="Hasegawa A."/>
            <person name="Hameed A."/>
            <person name="Lodhi M."/>
            <person name="Johnson A."/>
            <person name="Chen E."/>
            <person name="Marra M.A."/>
            <person name="Martienssen R."/>
            <person name="McCombie W.R."/>
        </authorList>
    </citation>
    <scope>NUCLEOTIDE SEQUENCE [LARGE SCALE GENOMIC DNA]</scope>
    <source>
        <strain>cv. Columbia</strain>
    </source>
</reference>
<reference key="3">
    <citation type="journal article" date="2017" name="Plant J.">
        <title>Araport11: a complete reannotation of the Arabidopsis thaliana reference genome.</title>
        <authorList>
            <person name="Cheng C.Y."/>
            <person name="Krishnakumar V."/>
            <person name="Chan A.P."/>
            <person name="Thibaud-Nissen F."/>
            <person name="Schobel S."/>
            <person name="Town C.D."/>
        </authorList>
    </citation>
    <scope>GENOME REANNOTATION</scope>
    <source>
        <strain>cv. Columbia</strain>
    </source>
</reference>
<reference key="4">
    <citation type="journal article" date="2002" name="Science">
        <title>Functional annotation of a full-length Arabidopsis cDNA collection.</title>
        <authorList>
            <person name="Seki M."/>
            <person name="Narusaka M."/>
            <person name="Kamiya A."/>
            <person name="Ishida J."/>
            <person name="Satou M."/>
            <person name="Sakurai T."/>
            <person name="Nakajima M."/>
            <person name="Enju A."/>
            <person name="Akiyama K."/>
            <person name="Oono Y."/>
            <person name="Muramatsu M."/>
            <person name="Hayashizaki Y."/>
            <person name="Kawai J."/>
            <person name="Carninci P."/>
            <person name="Itoh M."/>
            <person name="Ishii Y."/>
            <person name="Arakawa T."/>
            <person name="Shibata K."/>
            <person name="Shinagawa A."/>
            <person name="Shinozaki K."/>
        </authorList>
    </citation>
    <scope>NUCLEOTIDE SEQUENCE [LARGE SCALE MRNA] (ISOFORM 1)</scope>
    <source>
        <strain>cv. Columbia</strain>
    </source>
</reference>
<reference key="5">
    <citation type="journal article" date="2003" name="Science">
        <title>Empirical analysis of transcriptional activity in the Arabidopsis genome.</title>
        <authorList>
            <person name="Yamada K."/>
            <person name="Lim J."/>
            <person name="Dale J.M."/>
            <person name="Chen H."/>
            <person name="Shinn P."/>
            <person name="Palm C.J."/>
            <person name="Southwick A.M."/>
            <person name="Wu H.C."/>
            <person name="Kim C.J."/>
            <person name="Nguyen M."/>
            <person name="Pham P.K."/>
            <person name="Cheuk R.F."/>
            <person name="Karlin-Newmann G."/>
            <person name="Liu S.X."/>
            <person name="Lam B."/>
            <person name="Sakano H."/>
            <person name="Wu T."/>
            <person name="Yu G."/>
            <person name="Miranda M."/>
            <person name="Quach H.L."/>
            <person name="Tripp M."/>
            <person name="Chang C.H."/>
            <person name="Lee J.M."/>
            <person name="Toriumi M.J."/>
            <person name="Chan M.M."/>
            <person name="Tang C.C."/>
            <person name="Onodera C.S."/>
            <person name="Deng J.M."/>
            <person name="Akiyama K."/>
            <person name="Ansari Y."/>
            <person name="Arakawa T."/>
            <person name="Banh J."/>
            <person name="Banno F."/>
            <person name="Bowser L."/>
            <person name="Brooks S.Y."/>
            <person name="Carninci P."/>
            <person name="Chao Q."/>
            <person name="Choy N."/>
            <person name="Enju A."/>
            <person name="Goldsmith A.D."/>
            <person name="Gurjal M."/>
            <person name="Hansen N.F."/>
            <person name="Hayashizaki Y."/>
            <person name="Johnson-Hopson C."/>
            <person name="Hsuan V.W."/>
            <person name="Iida K."/>
            <person name="Karnes M."/>
            <person name="Khan S."/>
            <person name="Koesema E."/>
            <person name="Ishida J."/>
            <person name="Jiang P.X."/>
            <person name="Jones T."/>
            <person name="Kawai J."/>
            <person name="Kamiya A."/>
            <person name="Meyers C."/>
            <person name="Nakajima M."/>
            <person name="Narusaka M."/>
            <person name="Seki M."/>
            <person name="Sakurai T."/>
            <person name="Satou M."/>
            <person name="Tamse R."/>
            <person name="Vaysberg M."/>
            <person name="Wallender E.K."/>
            <person name="Wong C."/>
            <person name="Yamamura Y."/>
            <person name="Yuan S."/>
            <person name="Shinozaki K."/>
            <person name="Davis R.W."/>
            <person name="Theologis A."/>
            <person name="Ecker J.R."/>
        </authorList>
    </citation>
    <scope>NUCLEOTIDE SEQUENCE [LARGE SCALE MRNA] (ISOFORM 1)</scope>
    <source>
        <strain>cv. Columbia</strain>
    </source>
</reference>
<reference key="6">
    <citation type="journal article" date="2000" name="Plant J.">
        <title>Identification of genes encoding receptor-like protein kinases as possible targets of pathogen- and salicylic acid-induced WRKY DNA-binding proteins in Arabidopsis.</title>
        <authorList>
            <person name="Du L."/>
            <person name="Chen Z."/>
        </authorList>
    </citation>
    <scope>NUCLEOTIDE SEQUENCE [MRNA] OF 10-669 (ISOFORM 1)</scope>
    <scope>INDUCTION</scope>
</reference>
<reference key="7">
    <citation type="journal article" date="2000" name="Plant Cell Physiol.">
        <title>Salicylic acid induces the expression of a number of receptor-like kinase genes in Arabidopsis thaliana.</title>
        <authorList>
            <person name="Ohtake Y."/>
            <person name="Takahashi T."/>
            <person name="Komeda Y."/>
        </authorList>
    </citation>
    <scope>INDUCTION</scope>
</reference>
<reference key="8">
    <citation type="journal article" date="2001" name="Plant Physiol.">
        <title>A superfamily of proteins with novel cysteine-rich repeats.</title>
        <authorList>
            <person name="Chen Z."/>
        </authorList>
    </citation>
    <scope>GENE FAMILY ORGANIZATION</scope>
    <scope>NOMENCLATURE</scope>
</reference>
<reference key="9">
    <citation type="journal article" date="2004" name="Plant Mol. Biol.">
        <title>Activation of hypersensitive cell death by pathogen-induced receptor-like protein kinases from Arabidopsis.</title>
        <authorList>
            <person name="Chen K."/>
            <person name="Fan B."/>
            <person name="Du L."/>
            <person name="Chen Z."/>
        </authorList>
    </citation>
    <scope>INTERACTION WITH CRKIPS</scope>
</reference>
<gene>
    <name type="primary">CRK10</name>
    <name type="synonym">RLK4</name>
    <name type="ordered locus">At4g23180</name>
    <name type="ORF">F21P8.70</name>
</gene>
<comment type="catalytic activity">
    <reaction>
        <text>L-seryl-[protein] + ATP = O-phospho-L-seryl-[protein] + ADP + H(+)</text>
        <dbReference type="Rhea" id="RHEA:17989"/>
        <dbReference type="Rhea" id="RHEA-COMP:9863"/>
        <dbReference type="Rhea" id="RHEA-COMP:11604"/>
        <dbReference type="ChEBI" id="CHEBI:15378"/>
        <dbReference type="ChEBI" id="CHEBI:29999"/>
        <dbReference type="ChEBI" id="CHEBI:30616"/>
        <dbReference type="ChEBI" id="CHEBI:83421"/>
        <dbReference type="ChEBI" id="CHEBI:456216"/>
    </reaction>
</comment>
<comment type="catalytic activity">
    <reaction>
        <text>L-threonyl-[protein] + ATP = O-phospho-L-threonyl-[protein] + ADP + H(+)</text>
        <dbReference type="Rhea" id="RHEA:46608"/>
        <dbReference type="Rhea" id="RHEA-COMP:11060"/>
        <dbReference type="Rhea" id="RHEA-COMP:11605"/>
        <dbReference type="ChEBI" id="CHEBI:15378"/>
        <dbReference type="ChEBI" id="CHEBI:30013"/>
        <dbReference type="ChEBI" id="CHEBI:30616"/>
        <dbReference type="ChEBI" id="CHEBI:61977"/>
        <dbReference type="ChEBI" id="CHEBI:456216"/>
    </reaction>
</comment>
<comment type="subunit">
    <text evidence="9">Interacts with CRKIP1 (KAPP), CRKIP2 and CRKIP3, three kinase-associated type 2C proteins.</text>
</comment>
<comment type="subcellular location">
    <subcellularLocation>
        <location evidence="11">Membrane</location>
        <topology evidence="11">Single-pass membrane protein</topology>
    </subcellularLocation>
</comment>
<comment type="alternative products">
    <event type="alternative splicing"/>
    <isoform>
        <id>Q8GYA4-1</id>
        <name>1</name>
        <sequence type="displayed"/>
    </isoform>
    <isoform>
        <id>Q8GYA4-2</id>
        <name>2</name>
        <sequence type="described" ref="VSP_041302"/>
    </isoform>
</comment>
<comment type="induction">
    <text evidence="7 8">By salicylic acid (SA) or by a bacterial pathogen infection. May be regulated by WRKY DNA-binding proteins at the transcriptional level.</text>
</comment>
<comment type="similarity">
    <text evidence="3">Belongs to the protein kinase superfamily. Ser/Thr protein kinase family. CRK subfamily.</text>
</comment>
<comment type="sequence caution" evidence="11">
    <conflict type="erroneous initiation">
        <sequence resource="EMBL-CDS" id="AAK28315"/>
    </conflict>
    <text>Truncated N-terminus.</text>
</comment>
<comment type="sequence caution" evidence="11">
    <conflict type="erroneous gene model prediction">
        <sequence resource="EMBL-CDS" id="CAA18465"/>
    </conflict>
</comment>
<comment type="sequence caution" evidence="11">
    <conflict type="erroneous gene model prediction">
        <sequence resource="EMBL-CDS" id="CAB79273"/>
    </conflict>
</comment>
<feature type="signal peptide" evidence="2">
    <location>
        <begin position="1"/>
        <end position="34"/>
    </location>
</feature>
<feature type="chain" id="PRO_0000295057" description="Cysteine-rich receptor-like protein kinase 10">
    <location>
        <begin position="35"/>
        <end position="669"/>
    </location>
</feature>
<feature type="topological domain" description="Extracellular" evidence="2">
    <location>
        <begin position="35"/>
        <end position="285"/>
    </location>
</feature>
<feature type="transmembrane region" description="Helical" evidence="2">
    <location>
        <begin position="286"/>
        <end position="306"/>
    </location>
</feature>
<feature type="topological domain" description="Cytoplasmic" evidence="2">
    <location>
        <begin position="307"/>
        <end position="669"/>
    </location>
</feature>
<feature type="domain" description="Gnk2-homologous 1" evidence="4">
    <location>
        <begin position="38"/>
        <end position="142"/>
    </location>
</feature>
<feature type="domain" description="Gnk2-homologous 2" evidence="4">
    <location>
        <begin position="148"/>
        <end position="252"/>
    </location>
</feature>
<feature type="domain" description="Protein kinase" evidence="3">
    <location>
        <begin position="348"/>
        <end position="634"/>
    </location>
</feature>
<feature type="region of interest" description="Disordered" evidence="6">
    <location>
        <begin position="260"/>
        <end position="280"/>
    </location>
</feature>
<feature type="compositionally biased region" description="Pro residues" evidence="6">
    <location>
        <begin position="260"/>
        <end position="274"/>
    </location>
</feature>
<feature type="active site" description="Proton acceptor" evidence="3 5">
    <location>
        <position position="473"/>
    </location>
</feature>
<feature type="binding site" evidence="3">
    <location>
        <begin position="354"/>
        <end position="362"/>
    </location>
    <ligand>
        <name>ATP</name>
        <dbReference type="ChEBI" id="CHEBI:30616"/>
    </ligand>
</feature>
<feature type="binding site" evidence="3">
    <location>
        <position position="376"/>
    </location>
    <ligand>
        <name>ATP</name>
        <dbReference type="ChEBI" id="CHEBI:30616"/>
    </ligand>
</feature>
<feature type="modified residue" description="Phosphotyrosine" evidence="1">
    <location>
        <position position="421"/>
    </location>
</feature>
<feature type="modified residue" description="Phosphoserine" evidence="1">
    <location>
        <position position="477"/>
    </location>
</feature>
<feature type="modified residue" description="Phosphothreonine" evidence="1">
    <location>
        <position position="513"/>
    </location>
</feature>
<feature type="modified residue" description="Phosphotyrosine" evidence="1">
    <location>
        <position position="521"/>
    </location>
</feature>
<feature type="glycosylation site" description="N-linked (GlcNAc...) asparagine" evidence="2">
    <location>
        <position position="49"/>
    </location>
</feature>
<feature type="glycosylation site" description="N-linked (GlcNAc...) asparagine" evidence="2">
    <location>
        <position position="53"/>
    </location>
</feature>
<feature type="glycosylation site" description="N-linked (GlcNAc...) asparagine" evidence="2">
    <location>
        <position position="71"/>
    </location>
</feature>
<feature type="glycosylation site" description="N-linked (GlcNAc...) asparagine" evidence="2">
    <location>
        <position position="80"/>
    </location>
</feature>
<feature type="glycosylation site" description="N-linked (GlcNAc...) asparagine" evidence="2">
    <location>
        <position position="114"/>
    </location>
</feature>
<feature type="glycosylation site" description="N-linked (GlcNAc...) asparagine" evidence="2">
    <location>
        <position position="159"/>
    </location>
</feature>
<feature type="glycosylation site" description="N-linked (GlcNAc...) asparagine" evidence="2">
    <location>
        <position position="185"/>
    </location>
</feature>
<feature type="glycosylation site" description="N-linked (GlcNAc...) asparagine" evidence="2">
    <location>
        <position position="196"/>
    </location>
</feature>
<feature type="disulfide bond" evidence="4">
    <location>
        <begin position="96"/>
        <end position="105"/>
    </location>
</feature>
<feature type="disulfide bond" evidence="4">
    <location>
        <begin position="108"/>
        <end position="133"/>
    </location>
</feature>
<feature type="disulfide bond" evidence="4">
    <location>
        <begin position="209"/>
        <end position="218"/>
    </location>
</feature>
<feature type="disulfide bond" evidence="4">
    <location>
        <begin position="221"/>
        <end position="243"/>
    </location>
</feature>
<feature type="splice variant" id="VSP_041302" description="In isoform 2." evidence="10">
    <location>
        <begin position="1"/>
        <end position="11"/>
    </location>
</feature>
<feature type="sequence conflict" description="In Ref. 1; AAN60348." evidence="11" ref="1">
    <original>S</original>
    <variation>C</variation>
    <location>
        <position position="268"/>
    </location>
</feature>
<feature type="sequence conflict" description="In Ref. 6; AAK28315." evidence="11" ref="6">
    <original>GKD</original>
    <variation>EKE</variation>
    <location>
        <begin position="279"/>
        <end position="281"/>
    </location>
</feature>
<feature type="sequence conflict" description="In Ref. 6; AAK28315." evidence="11" ref="6">
    <original>L</original>
    <variation>R</variation>
    <location>
        <position position="300"/>
    </location>
</feature>
<feature type="sequence conflict" description="In Ref. 6; AAK28315." evidence="11" ref="6">
    <original>Y</original>
    <variation>S</variation>
    <location>
        <position position="318"/>
    </location>
</feature>
<feature type="sequence conflict" description="In Ref. 6; AAK28315." evidence="11" ref="6">
    <original>N</original>
    <variation>T</variation>
    <location>
        <position position="478"/>
    </location>
</feature>
<protein>
    <recommendedName>
        <fullName>Cysteine-rich receptor-like protein kinase 10</fullName>
        <shortName>Cysteine-rich RLK10</shortName>
        <ecNumber>2.7.11.-</ecNumber>
    </recommendedName>
    <alternativeName>
        <fullName>Receptor-like protein kinase 4</fullName>
    </alternativeName>
</protein>
<organism>
    <name type="scientific">Arabidopsis thaliana</name>
    <name type="common">Mouse-ear cress</name>
    <dbReference type="NCBI Taxonomy" id="3702"/>
    <lineage>
        <taxon>Eukaryota</taxon>
        <taxon>Viridiplantae</taxon>
        <taxon>Streptophyta</taxon>
        <taxon>Embryophyta</taxon>
        <taxon>Tracheophyta</taxon>
        <taxon>Spermatophyta</taxon>
        <taxon>Magnoliopsida</taxon>
        <taxon>eudicotyledons</taxon>
        <taxon>Gunneridae</taxon>
        <taxon>Pentapetalae</taxon>
        <taxon>rosids</taxon>
        <taxon>malvids</taxon>
        <taxon>Brassicales</taxon>
        <taxon>Brassicaceae</taxon>
        <taxon>Camelineae</taxon>
        <taxon>Arabidopsis</taxon>
    </lineage>
</organism>
<keyword id="KW-0025">Alternative splicing</keyword>
<keyword id="KW-0067">ATP-binding</keyword>
<keyword id="KW-1015">Disulfide bond</keyword>
<keyword id="KW-0325">Glycoprotein</keyword>
<keyword id="KW-0418">Kinase</keyword>
<keyword id="KW-0472">Membrane</keyword>
<keyword id="KW-0547">Nucleotide-binding</keyword>
<keyword id="KW-0597">Phosphoprotein</keyword>
<keyword id="KW-0675">Receptor</keyword>
<keyword id="KW-1185">Reference proteome</keyword>
<keyword id="KW-0677">Repeat</keyword>
<keyword id="KW-0723">Serine/threonine-protein kinase</keyword>
<keyword id="KW-0732">Signal</keyword>
<keyword id="KW-0808">Transferase</keyword>
<keyword id="KW-0812">Transmembrane</keyword>
<keyword id="KW-1133">Transmembrane helix</keyword>
<proteinExistence type="evidence at protein level"/>
<accession>Q8GYA4</accession>
<accession>O65470</accession>
<accession>Q8H785</accession>
<accession>Q9C5T0</accession>
<evidence type="ECO:0000250" key="1">
    <source>
        <dbReference type="UniProtKB" id="O48814"/>
    </source>
</evidence>
<evidence type="ECO:0000255" key="2"/>
<evidence type="ECO:0000255" key="3">
    <source>
        <dbReference type="PROSITE-ProRule" id="PRU00159"/>
    </source>
</evidence>
<evidence type="ECO:0000255" key="4">
    <source>
        <dbReference type="PROSITE-ProRule" id="PRU00806"/>
    </source>
</evidence>
<evidence type="ECO:0000255" key="5">
    <source>
        <dbReference type="PROSITE-ProRule" id="PRU10027"/>
    </source>
</evidence>
<evidence type="ECO:0000256" key="6">
    <source>
        <dbReference type="SAM" id="MobiDB-lite"/>
    </source>
</evidence>
<evidence type="ECO:0000269" key="7">
    <source>
    </source>
</evidence>
<evidence type="ECO:0000269" key="8">
    <source>
    </source>
</evidence>
<evidence type="ECO:0000269" key="9">
    <source>
    </source>
</evidence>
<evidence type="ECO:0000303" key="10">
    <source ref="1"/>
</evidence>
<evidence type="ECO:0000305" key="11"/>
<dbReference type="EC" id="2.7.11.-"/>
<dbReference type="EMBL" id="AF083790">
    <property type="protein sequence ID" value="AAN60348.1"/>
    <property type="molecule type" value="mRNA"/>
</dbReference>
<dbReference type="EMBL" id="AL022347">
    <property type="protein sequence ID" value="CAA18465.1"/>
    <property type="status" value="ALT_SEQ"/>
    <property type="molecule type" value="Genomic_DNA"/>
</dbReference>
<dbReference type="EMBL" id="AL161558">
    <property type="protein sequence ID" value="CAB79273.1"/>
    <property type="status" value="ALT_SEQ"/>
    <property type="molecule type" value="Genomic_DNA"/>
</dbReference>
<dbReference type="EMBL" id="CP002687">
    <property type="protein sequence ID" value="AEE84719.1"/>
    <property type="molecule type" value="Genomic_DNA"/>
</dbReference>
<dbReference type="EMBL" id="AK117765">
    <property type="protein sequence ID" value="BAC42412.1"/>
    <property type="molecule type" value="mRNA"/>
</dbReference>
<dbReference type="EMBL" id="BT005954">
    <property type="protein sequence ID" value="AAO64889.1"/>
    <property type="molecule type" value="mRNA"/>
</dbReference>
<dbReference type="EMBL" id="AF224705">
    <property type="protein sequence ID" value="AAK28315.1"/>
    <property type="status" value="ALT_INIT"/>
    <property type="molecule type" value="mRNA"/>
</dbReference>
<dbReference type="PIR" id="T04835">
    <property type="entry name" value="T04835"/>
</dbReference>
<dbReference type="RefSeq" id="NP_567679.2">
    <molecule id="Q8GYA4-1"/>
    <property type="nucleotide sequence ID" value="NM_118447.3"/>
</dbReference>
<dbReference type="SMR" id="Q8GYA4"/>
<dbReference type="BioGRID" id="13706">
    <property type="interactions" value="14"/>
</dbReference>
<dbReference type="FunCoup" id="Q8GYA4">
    <property type="interactions" value="280"/>
</dbReference>
<dbReference type="IntAct" id="Q8GYA4">
    <property type="interactions" value="16"/>
</dbReference>
<dbReference type="STRING" id="3702.Q8GYA4"/>
<dbReference type="GlyCosmos" id="Q8GYA4">
    <property type="glycosylation" value="8 sites, No reported glycans"/>
</dbReference>
<dbReference type="GlyGen" id="Q8GYA4">
    <property type="glycosylation" value="8 sites"/>
</dbReference>
<dbReference type="iPTMnet" id="Q8GYA4"/>
<dbReference type="PaxDb" id="3702-AT4G23180.1"/>
<dbReference type="ProteomicsDB" id="222677">
    <molecule id="Q8GYA4-1"/>
</dbReference>
<dbReference type="EnsemblPlants" id="AT4G23180.1">
    <molecule id="Q8GYA4-1"/>
    <property type="protein sequence ID" value="AT4G23180.1"/>
    <property type="gene ID" value="AT4G23180"/>
</dbReference>
<dbReference type="GeneID" id="828417"/>
<dbReference type="Gramene" id="AT4G23180.1">
    <molecule id="Q8GYA4-1"/>
    <property type="protein sequence ID" value="AT4G23180.1"/>
    <property type="gene ID" value="AT4G23180"/>
</dbReference>
<dbReference type="KEGG" id="ath:AT4G23180"/>
<dbReference type="Araport" id="AT4G23180"/>
<dbReference type="TAIR" id="AT4G23180">
    <property type="gene designation" value="CRK10"/>
</dbReference>
<dbReference type="eggNOG" id="ENOG502QWDY">
    <property type="taxonomic scope" value="Eukaryota"/>
</dbReference>
<dbReference type="HOGENOM" id="CLU_000288_35_2_1"/>
<dbReference type="InParanoid" id="Q8GYA4"/>
<dbReference type="OMA" id="QEQIRFP"/>
<dbReference type="PRO" id="PR:Q8GYA4"/>
<dbReference type="Proteomes" id="UP000006548">
    <property type="component" value="Chromosome 4"/>
</dbReference>
<dbReference type="ExpressionAtlas" id="Q8GYA4">
    <property type="expression patterns" value="baseline and differential"/>
</dbReference>
<dbReference type="GO" id="GO:0005829">
    <property type="term" value="C:cytosol"/>
    <property type="evidence" value="ECO:0007005"/>
    <property type="project" value="TAIR"/>
</dbReference>
<dbReference type="GO" id="GO:0016020">
    <property type="term" value="C:membrane"/>
    <property type="evidence" value="ECO:0007669"/>
    <property type="project" value="UniProtKB-SubCell"/>
</dbReference>
<dbReference type="GO" id="GO:0005524">
    <property type="term" value="F:ATP binding"/>
    <property type="evidence" value="ECO:0007669"/>
    <property type="project" value="UniProtKB-KW"/>
</dbReference>
<dbReference type="GO" id="GO:0106310">
    <property type="term" value="F:protein serine kinase activity"/>
    <property type="evidence" value="ECO:0007669"/>
    <property type="project" value="RHEA"/>
</dbReference>
<dbReference type="GO" id="GO:0004674">
    <property type="term" value="F:protein serine/threonine kinase activity"/>
    <property type="evidence" value="ECO:0007669"/>
    <property type="project" value="UniProtKB-KW"/>
</dbReference>
<dbReference type="CDD" id="cd23509">
    <property type="entry name" value="Gnk2-like"/>
    <property type="match status" value="1"/>
</dbReference>
<dbReference type="CDD" id="cd14066">
    <property type="entry name" value="STKc_IRAK"/>
    <property type="match status" value="1"/>
</dbReference>
<dbReference type="FunFam" id="3.30.200.20:FF:000142">
    <property type="entry name" value="Cysteine-rich receptor-like protein kinase 10"/>
    <property type="match status" value="1"/>
</dbReference>
<dbReference type="FunFam" id="3.30.430.20:FF:000002">
    <property type="entry name" value="Cysteine-rich receptor-like protein kinase 10"/>
    <property type="match status" value="1"/>
</dbReference>
<dbReference type="FunFam" id="1.10.510.10:FF:000129">
    <property type="entry name" value="cysteine-rich receptor-like protein kinase 10"/>
    <property type="match status" value="1"/>
</dbReference>
<dbReference type="FunFam" id="3.30.430.20:FF:000013">
    <property type="entry name" value="Cysteine-rich RLK (RECEPTOR-like protein kinase) 23"/>
    <property type="match status" value="1"/>
</dbReference>
<dbReference type="Gene3D" id="3.30.430.20">
    <property type="entry name" value="Gnk2 domain, C-X8-C-X2-C motif"/>
    <property type="match status" value="2"/>
</dbReference>
<dbReference type="Gene3D" id="3.30.200.20">
    <property type="entry name" value="Phosphorylase Kinase, domain 1"/>
    <property type="match status" value="1"/>
</dbReference>
<dbReference type="Gene3D" id="1.10.510.10">
    <property type="entry name" value="Transferase(Phosphotransferase) domain 1"/>
    <property type="match status" value="1"/>
</dbReference>
<dbReference type="InterPro" id="IPR054603">
    <property type="entry name" value="CR_prot_dom_plant"/>
</dbReference>
<dbReference type="InterPro" id="IPR002902">
    <property type="entry name" value="GNK2"/>
</dbReference>
<dbReference type="InterPro" id="IPR038408">
    <property type="entry name" value="GNK2_sf"/>
</dbReference>
<dbReference type="InterPro" id="IPR011009">
    <property type="entry name" value="Kinase-like_dom_sf"/>
</dbReference>
<dbReference type="InterPro" id="IPR000719">
    <property type="entry name" value="Prot_kinase_dom"/>
</dbReference>
<dbReference type="InterPro" id="IPR017441">
    <property type="entry name" value="Protein_kinase_ATP_BS"/>
</dbReference>
<dbReference type="InterPro" id="IPR001245">
    <property type="entry name" value="Ser-Thr/Tyr_kinase_cat_dom"/>
</dbReference>
<dbReference type="InterPro" id="IPR008271">
    <property type="entry name" value="Ser/Thr_kinase_AS"/>
</dbReference>
<dbReference type="PANTHER" id="PTHR27002:SF1001">
    <property type="entry name" value="CYSTEINE-RICH RECEPTOR-LIKE PROTEIN KINASE 10-RELATED"/>
    <property type="match status" value="1"/>
</dbReference>
<dbReference type="PANTHER" id="PTHR27002">
    <property type="entry name" value="RECEPTOR-LIKE SERINE/THREONINE-PROTEIN KINASE SD1-8"/>
    <property type="match status" value="1"/>
</dbReference>
<dbReference type="Pfam" id="PF22812">
    <property type="entry name" value="CR_prot_dom_plant"/>
    <property type="match status" value="1"/>
</dbReference>
<dbReference type="Pfam" id="PF07714">
    <property type="entry name" value="PK_Tyr_Ser-Thr"/>
    <property type="match status" value="1"/>
</dbReference>
<dbReference type="Pfam" id="PF01657">
    <property type="entry name" value="Stress-antifung"/>
    <property type="match status" value="2"/>
</dbReference>
<dbReference type="SMART" id="SM00220">
    <property type="entry name" value="S_TKc"/>
    <property type="match status" value="1"/>
</dbReference>
<dbReference type="SUPFAM" id="SSF56112">
    <property type="entry name" value="Protein kinase-like (PK-like)"/>
    <property type="match status" value="1"/>
</dbReference>
<dbReference type="PROSITE" id="PS51473">
    <property type="entry name" value="GNK2"/>
    <property type="match status" value="2"/>
</dbReference>
<dbReference type="PROSITE" id="PS00107">
    <property type="entry name" value="PROTEIN_KINASE_ATP"/>
    <property type="match status" value="1"/>
</dbReference>
<dbReference type="PROSITE" id="PS50011">
    <property type="entry name" value="PROTEIN_KINASE_DOM"/>
    <property type="match status" value="1"/>
</dbReference>
<dbReference type="PROSITE" id="PS00108">
    <property type="entry name" value="PROTEIN_KINASE_ST"/>
    <property type="match status" value="1"/>
</dbReference>
<sequence length="669" mass="74283">MRRNTDQESPIMSYYSSFFFLFLFSFLTSFRVSAQDPTYVYHTCQNTANYTSNSTYNNNLKTLLASLSSRNASYSTGFQNATVGQAPDRVTGLFNCRGDVSTEVCRRCVSFAVNDTLTRCPNQKEATLYYDECVLRYSNQNILSTLITTGGVILVNTRNVTSNQLDLLSDLVLPTLNQAATVALNSSKKFGTRKNNFTALQSFYGLVQCTPDLTRQDCSRCLQLVINQIPTDRIGARIINPSCTSRYEIYAFYTESAVPPPPPPPSISTPPVSAPPRSGKDGNSKVLVIAIVVPIIVAVLLFIAGYCFLTRRARKSYYTPSAFAGDDITTADSLQLDYRTIQTATDDFVESNKIGQGGFGEVYKGTLSDGTEVAVKRLSKSSGQGEVEFKNEVVLVAKLQHRNLVRLLGFCLDGEERVLVYEYVPNKSLDYFLFDPAKKGQLDWTRRYKIIGGVARGILYLHQDSRLTIIHRDLKASNILLDADMNPKIADFGMARIFGLDQTEENTSRIVGTYGYMSPEYAMHGQYSMKSDVYSFGVLVLEIISGKKNSSFYQTDGAHDLVSYAWGLWSNGRPLELVDPAIVENCQRNEVVRCVHIGLLCVQEDPAERPTLSTIVLMLTSNTVTLPVPRQPGLFFQSRIGKDPLDTDTTSKSLLGSVDDASITDIHPR</sequence>
<name>CRK10_ARATH</name>